<evidence type="ECO:0000250" key="1">
    <source>
        <dbReference type="UniProtKB" id="Q8L9J7"/>
    </source>
</evidence>
<evidence type="ECO:0000255" key="2"/>
<evidence type="ECO:0000305" key="3"/>
<keyword id="KW-1003">Cell membrane</keyword>
<keyword id="KW-0472">Membrane</keyword>
<keyword id="KW-1185">Reference proteome</keyword>
<keyword id="KW-0677">Repeat</keyword>
<keyword id="KW-0732">Signal</keyword>
<keyword id="KW-0762">Sugar transport</keyword>
<keyword id="KW-0812">Transmembrane</keyword>
<keyword id="KW-1133">Transmembrane helix</keyword>
<keyword id="KW-0813">Transport</keyword>
<protein>
    <recommendedName>
        <fullName>Bidirectional sugar transporter SWEET2a</fullName>
        <shortName>OsSWEET2a</shortName>
    </recommendedName>
</protein>
<name>SWT2A_ORYSJ</name>
<proteinExistence type="evidence at transcript level"/>
<dbReference type="EMBL" id="AP004361">
    <property type="protein sequence ID" value="BAD88223.1"/>
    <property type="molecule type" value="Genomic_DNA"/>
</dbReference>
<dbReference type="EMBL" id="AP008207">
    <property type="protein sequence ID" value="BAF05184.1"/>
    <property type="molecule type" value="Genomic_DNA"/>
</dbReference>
<dbReference type="EMBL" id="AP014957">
    <property type="protein sequence ID" value="BAS72570.1"/>
    <property type="molecule type" value="Genomic_DNA"/>
</dbReference>
<dbReference type="EMBL" id="CM000138">
    <property type="protein sequence ID" value="EAZ12250.1"/>
    <property type="status" value="ALT_INIT"/>
    <property type="molecule type" value="Genomic_DNA"/>
</dbReference>
<dbReference type="EMBL" id="AK066226">
    <property type="protein sequence ID" value="BAG89875.1"/>
    <property type="molecule type" value="mRNA"/>
</dbReference>
<dbReference type="EMBL" id="AK104143">
    <property type="protein sequence ID" value="BAG96450.1"/>
    <property type="molecule type" value="mRNA"/>
</dbReference>
<dbReference type="EMBL" id="AK104255">
    <property type="protein sequence ID" value="BAG96548.1"/>
    <property type="molecule type" value="mRNA"/>
</dbReference>
<dbReference type="RefSeq" id="XP_015615030.1">
    <property type="nucleotide sequence ID" value="XM_015759544.1"/>
</dbReference>
<dbReference type="SMR" id="Q5JJY5"/>
<dbReference type="FunCoup" id="Q5JJY5">
    <property type="interactions" value="395"/>
</dbReference>
<dbReference type="TCDB" id="2.A.123.1.28">
    <property type="family name" value="the sweet, pq-loop, saliva, mtn3 (sweet) family"/>
</dbReference>
<dbReference type="PaxDb" id="39947-Q5JJY5"/>
<dbReference type="EnsemblPlants" id="Os01t0541800-01">
    <property type="protein sequence ID" value="Os01t0541800-01"/>
    <property type="gene ID" value="Os01g0541800"/>
</dbReference>
<dbReference type="Gramene" id="Os01t0541800-01">
    <property type="protein sequence ID" value="Os01t0541800-01"/>
    <property type="gene ID" value="Os01g0541800"/>
</dbReference>
<dbReference type="KEGG" id="dosa:Os01g0541800"/>
<dbReference type="eggNOG" id="KOG1623">
    <property type="taxonomic scope" value="Eukaryota"/>
</dbReference>
<dbReference type="HOGENOM" id="CLU_048643_1_1_1"/>
<dbReference type="InParanoid" id="Q5JJY5"/>
<dbReference type="OMA" id="QLNDYYI"/>
<dbReference type="OrthoDB" id="409725at2759"/>
<dbReference type="Proteomes" id="UP000000763">
    <property type="component" value="Chromosome 1"/>
</dbReference>
<dbReference type="Proteomes" id="UP000007752">
    <property type="component" value="Chromosome 1"/>
</dbReference>
<dbReference type="Proteomes" id="UP000059680">
    <property type="component" value="Chromosome 1"/>
</dbReference>
<dbReference type="GO" id="GO:0016020">
    <property type="term" value="C:membrane"/>
    <property type="evidence" value="ECO:0000318"/>
    <property type="project" value="GO_Central"/>
</dbReference>
<dbReference type="GO" id="GO:0005886">
    <property type="term" value="C:plasma membrane"/>
    <property type="evidence" value="ECO:0000250"/>
    <property type="project" value="UniProtKB"/>
</dbReference>
<dbReference type="GO" id="GO:0051119">
    <property type="term" value="F:sugar transmembrane transporter activity"/>
    <property type="evidence" value="ECO:0000250"/>
    <property type="project" value="UniProtKB"/>
</dbReference>
<dbReference type="GO" id="GO:0008643">
    <property type="term" value="P:carbohydrate transport"/>
    <property type="evidence" value="ECO:0000318"/>
    <property type="project" value="GO_Central"/>
</dbReference>
<dbReference type="FunFam" id="1.20.1280.290:FF:000001">
    <property type="entry name" value="Bidirectional sugar transporter SWEET"/>
    <property type="match status" value="1"/>
</dbReference>
<dbReference type="FunFam" id="1.20.1280.290:FF:000002">
    <property type="entry name" value="Bidirectional sugar transporter SWEET"/>
    <property type="match status" value="1"/>
</dbReference>
<dbReference type="Gene3D" id="1.20.1280.290">
    <property type="match status" value="2"/>
</dbReference>
<dbReference type="InterPro" id="IPR047664">
    <property type="entry name" value="SWEET"/>
</dbReference>
<dbReference type="InterPro" id="IPR004316">
    <property type="entry name" value="SWEET_rpt"/>
</dbReference>
<dbReference type="PANTHER" id="PTHR10791:SF57">
    <property type="entry name" value="BIDIRECTIONAL SUGAR TRANSPORTER SWEET2A"/>
    <property type="match status" value="1"/>
</dbReference>
<dbReference type="PANTHER" id="PTHR10791">
    <property type="entry name" value="RAG1-ACTIVATING PROTEIN 1"/>
    <property type="match status" value="1"/>
</dbReference>
<dbReference type="Pfam" id="PF03083">
    <property type="entry name" value="MtN3_slv"/>
    <property type="match status" value="2"/>
</dbReference>
<organism>
    <name type="scientific">Oryza sativa subsp. japonica</name>
    <name type="common">Rice</name>
    <dbReference type="NCBI Taxonomy" id="39947"/>
    <lineage>
        <taxon>Eukaryota</taxon>
        <taxon>Viridiplantae</taxon>
        <taxon>Streptophyta</taxon>
        <taxon>Embryophyta</taxon>
        <taxon>Tracheophyta</taxon>
        <taxon>Spermatophyta</taxon>
        <taxon>Magnoliopsida</taxon>
        <taxon>Liliopsida</taxon>
        <taxon>Poales</taxon>
        <taxon>Poaceae</taxon>
        <taxon>BOP clade</taxon>
        <taxon>Oryzoideae</taxon>
        <taxon>Oryzeae</taxon>
        <taxon>Oryzinae</taxon>
        <taxon>Oryza</taxon>
        <taxon>Oryza sativa</taxon>
    </lineage>
</organism>
<reference key="1">
    <citation type="journal article" date="2002" name="Nature">
        <title>The genome sequence and structure of rice chromosome 1.</title>
        <authorList>
            <person name="Sasaki T."/>
            <person name="Matsumoto T."/>
            <person name="Yamamoto K."/>
            <person name="Sakata K."/>
            <person name="Baba T."/>
            <person name="Katayose Y."/>
            <person name="Wu J."/>
            <person name="Niimura Y."/>
            <person name="Cheng Z."/>
            <person name="Nagamura Y."/>
            <person name="Antonio B.A."/>
            <person name="Kanamori H."/>
            <person name="Hosokawa S."/>
            <person name="Masukawa M."/>
            <person name="Arikawa K."/>
            <person name="Chiden Y."/>
            <person name="Hayashi M."/>
            <person name="Okamoto M."/>
            <person name="Ando T."/>
            <person name="Aoki H."/>
            <person name="Arita K."/>
            <person name="Hamada M."/>
            <person name="Harada C."/>
            <person name="Hijishita S."/>
            <person name="Honda M."/>
            <person name="Ichikawa Y."/>
            <person name="Idonuma A."/>
            <person name="Iijima M."/>
            <person name="Ikeda M."/>
            <person name="Ikeno M."/>
            <person name="Ito S."/>
            <person name="Ito T."/>
            <person name="Ito Y."/>
            <person name="Ito Y."/>
            <person name="Iwabuchi A."/>
            <person name="Kamiya K."/>
            <person name="Karasawa W."/>
            <person name="Katagiri S."/>
            <person name="Kikuta A."/>
            <person name="Kobayashi N."/>
            <person name="Kono I."/>
            <person name="Machita K."/>
            <person name="Maehara T."/>
            <person name="Mizuno H."/>
            <person name="Mizubayashi T."/>
            <person name="Mukai Y."/>
            <person name="Nagasaki H."/>
            <person name="Nakashima M."/>
            <person name="Nakama Y."/>
            <person name="Nakamichi Y."/>
            <person name="Nakamura M."/>
            <person name="Namiki N."/>
            <person name="Negishi M."/>
            <person name="Ohta I."/>
            <person name="Ono N."/>
            <person name="Saji S."/>
            <person name="Sakai K."/>
            <person name="Shibata M."/>
            <person name="Shimokawa T."/>
            <person name="Shomura A."/>
            <person name="Song J."/>
            <person name="Takazaki Y."/>
            <person name="Terasawa K."/>
            <person name="Tsuji K."/>
            <person name="Waki K."/>
            <person name="Yamagata H."/>
            <person name="Yamane H."/>
            <person name="Yoshiki S."/>
            <person name="Yoshihara R."/>
            <person name="Yukawa K."/>
            <person name="Zhong H."/>
            <person name="Iwama H."/>
            <person name="Endo T."/>
            <person name="Ito H."/>
            <person name="Hahn J.H."/>
            <person name="Kim H.-I."/>
            <person name="Eun M.-Y."/>
            <person name="Yano M."/>
            <person name="Jiang J."/>
            <person name="Gojobori T."/>
        </authorList>
    </citation>
    <scope>NUCLEOTIDE SEQUENCE [LARGE SCALE GENOMIC DNA]</scope>
    <source>
        <strain>cv. Nipponbare</strain>
    </source>
</reference>
<reference key="2">
    <citation type="journal article" date="2005" name="Nature">
        <title>The map-based sequence of the rice genome.</title>
        <authorList>
            <consortium name="International rice genome sequencing project (IRGSP)"/>
        </authorList>
    </citation>
    <scope>NUCLEOTIDE SEQUENCE [LARGE SCALE GENOMIC DNA]</scope>
    <source>
        <strain>cv. Nipponbare</strain>
    </source>
</reference>
<reference key="3">
    <citation type="journal article" date="2008" name="Nucleic Acids Res.">
        <title>The rice annotation project database (RAP-DB): 2008 update.</title>
        <authorList>
            <consortium name="The rice annotation project (RAP)"/>
        </authorList>
    </citation>
    <scope>GENOME REANNOTATION</scope>
    <source>
        <strain>cv. Nipponbare</strain>
    </source>
</reference>
<reference key="4">
    <citation type="journal article" date="2013" name="Rice">
        <title>Improvement of the Oryza sativa Nipponbare reference genome using next generation sequence and optical map data.</title>
        <authorList>
            <person name="Kawahara Y."/>
            <person name="de la Bastide M."/>
            <person name="Hamilton J.P."/>
            <person name="Kanamori H."/>
            <person name="McCombie W.R."/>
            <person name="Ouyang S."/>
            <person name="Schwartz D.C."/>
            <person name="Tanaka T."/>
            <person name="Wu J."/>
            <person name="Zhou S."/>
            <person name="Childs K.L."/>
            <person name="Davidson R.M."/>
            <person name="Lin H."/>
            <person name="Quesada-Ocampo L."/>
            <person name="Vaillancourt B."/>
            <person name="Sakai H."/>
            <person name="Lee S.S."/>
            <person name="Kim J."/>
            <person name="Numa H."/>
            <person name="Itoh T."/>
            <person name="Buell C.R."/>
            <person name="Matsumoto T."/>
        </authorList>
    </citation>
    <scope>GENOME REANNOTATION</scope>
    <source>
        <strain>cv. Nipponbare</strain>
    </source>
</reference>
<reference key="5">
    <citation type="journal article" date="2005" name="PLoS Biol.">
        <title>The genomes of Oryza sativa: a history of duplications.</title>
        <authorList>
            <person name="Yu J."/>
            <person name="Wang J."/>
            <person name="Lin W."/>
            <person name="Li S."/>
            <person name="Li H."/>
            <person name="Zhou J."/>
            <person name="Ni P."/>
            <person name="Dong W."/>
            <person name="Hu S."/>
            <person name="Zeng C."/>
            <person name="Zhang J."/>
            <person name="Zhang Y."/>
            <person name="Li R."/>
            <person name="Xu Z."/>
            <person name="Li S."/>
            <person name="Li X."/>
            <person name="Zheng H."/>
            <person name="Cong L."/>
            <person name="Lin L."/>
            <person name="Yin J."/>
            <person name="Geng J."/>
            <person name="Li G."/>
            <person name="Shi J."/>
            <person name="Liu J."/>
            <person name="Lv H."/>
            <person name="Li J."/>
            <person name="Wang J."/>
            <person name="Deng Y."/>
            <person name="Ran L."/>
            <person name="Shi X."/>
            <person name="Wang X."/>
            <person name="Wu Q."/>
            <person name="Li C."/>
            <person name="Ren X."/>
            <person name="Wang J."/>
            <person name="Wang X."/>
            <person name="Li D."/>
            <person name="Liu D."/>
            <person name="Zhang X."/>
            <person name="Ji Z."/>
            <person name="Zhao W."/>
            <person name="Sun Y."/>
            <person name="Zhang Z."/>
            <person name="Bao J."/>
            <person name="Han Y."/>
            <person name="Dong L."/>
            <person name="Ji J."/>
            <person name="Chen P."/>
            <person name="Wu S."/>
            <person name="Liu J."/>
            <person name="Xiao Y."/>
            <person name="Bu D."/>
            <person name="Tan J."/>
            <person name="Yang L."/>
            <person name="Ye C."/>
            <person name="Zhang J."/>
            <person name="Xu J."/>
            <person name="Zhou Y."/>
            <person name="Yu Y."/>
            <person name="Zhang B."/>
            <person name="Zhuang S."/>
            <person name="Wei H."/>
            <person name="Liu B."/>
            <person name="Lei M."/>
            <person name="Yu H."/>
            <person name="Li Y."/>
            <person name="Xu H."/>
            <person name="Wei S."/>
            <person name="He X."/>
            <person name="Fang L."/>
            <person name="Zhang Z."/>
            <person name="Zhang Y."/>
            <person name="Huang X."/>
            <person name="Su Z."/>
            <person name="Tong W."/>
            <person name="Li J."/>
            <person name="Tong Z."/>
            <person name="Li S."/>
            <person name="Ye J."/>
            <person name="Wang L."/>
            <person name="Fang L."/>
            <person name="Lei T."/>
            <person name="Chen C.-S."/>
            <person name="Chen H.-C."/>
            <person name="Xu Z."/>
            <person name="Li H."/>
            <person name="Huang H."/>
            <person name="Zhang F."/>
            <person name="Xu H."/>
            <person name="Li N."/>
            <person name="Zhao C."/>
            <person name="Li S."/>
            <person name="Dong L."/>
            <person name="Huang Y."/>
            <person name="Li L."/>
            <person name="Xi Y."/>
            <person name="Qi Q."/>
            <person name="Li W."/>
            <person name="Zhang B."/>
            <person name="Hu W."/>
            <person name="Zhang Y."/>
            <person name="Tian X."/>
            <person name="Jiao Y."/>
            <person name="Liang X."/>
            <person name="Jin J."/>
            <person name="Gao L."/>
            <person name="Zheng W."/>
            <person name="Hao B."/>
            <person name="Liu S.-M."/>
            <person name="Wang W."/>
            <person name="Yuan L."/>
            <person name="Cao M."/>
            <person name="McDermott J."/>
            <person name="Samudrala R."/>
            <person name="Wang J."/>
            <person name="Wong G.K.-S."/>
            <person name="Yang H."/>
        </authorList>
    </citation>
    <scope>NUCLEOTIDE SEQUENCE [LARGE SCALE GENOMIC DNA]</scope>
    <source>
        <strain>cv. Nipponbare</strain>
    </source>
</reference>
<reference key="6">
    <citation type="journal article" date="2003" name="Science">
        <title>Collection, mapping, and annotation of over 28,000 cDNA clones from japonica rice.</title>
        <authorList>
            <consortium name="The rice full-length cDNA consortium"/>
        </authorList>
    </citation>
    <scope>NUCLEOTIDE SEQUENCE [LARGE SCALE MRNA]</scope>
    <source>
        <strain>cv. Nipponbare</strain>
    </source>
</reference>
<reference key="7">
    <citation type="journal article" date="2010" name="Nature">
        <title>Sugar transporters for intercellular exchange and nutrition of pathogens.</title>
        <authorList>
            <person name="Chen L.-Q."/>
            <person name="Hou B.-H."/>
            <person name="Lalonde S."/>
            <person name="Takanaga H."/>
            <person name="Hartung M.L."/>
            <person name="Qu X.-Q."/>
            <person name="Guo W.-J."/>
            <person name="Kim J.-G."/>
            <person name="Underwood W."/>
            <person name="Chaudhuri B."/>
            <person name="Chermak D."/>
            <person name="Antony G."/>
            <person name="White F.F."/>
            <person name="Somerville S.C."/>
            <person name="Mudgett M.B."/>
            <person name="Frommer W.B."/>
        </authorList>
    </citation>
    <scope>GENE FAMILY</scope>
    <scope>NOMENCLATURE</scope>
</reference>
<comment type="function">
    <text evidence="1">Mediates both low-affinity uptake and efflux of sugar across the plasma membrane.</text>
</comment>
<comment type="subunit">
    <text evidence="1">Forms homooligomers and/or heterooligomers.</text>
</comment>
<comment type="subcellular location">
    <subcellularLocation>
        <location evidence="1">Cell membrane</location>
        <topology evidence="1">Multi-pass membrane protein</topology>
    </subcellularLocation>
</comment>
<comment type="similarity">
    <text evidence="3">Belongs to the SWEET sugar transporter family.</text>
</comment>
<comment type="sequence caution" evidence="3">
    <conflict type="erroneous initiation">
        <sequence resource="EMBL-CDS" id="EAZ12250"/>
    </conflict>
    <text>Truncated N-terminus.</text>
</comment>
<sequence>MMNALGLSVAATSTGSPFHDVCCYGAGIAGNIFALVLFISPLPTFKRIVRNGSTEQFSAMPYIYSLLNCLICLWYGLPFVSYGVVLVATVNSIGALFQLAYTATFIAFADAKNRVKVSSLLVMVFGVFALIVYVSLALFDHQTRQLFVGYLSVASLIFMFASPLSIINLVIRTKSVEYMPFYLSLSMFLMSVSFFAYGVLLHDFFIYIPNGIGTVLGVIQLVLYGYFRKGSREDSLPLLVTHT</sequence>
<accession>Q5JJY5</accession>
<accession>A0A0P0V3P9</accession>
<accession>A2ZU53</accession>
<feature type="signal peptide" evidence="2">
    <location>
        <begin position="1"/>
        <end position="15"/>
    </location>
</feature>
<feature type="chain" id="PRO_0000404120" description="Bidirectional sugar transporter SWEET2a">
    <location>
        <begin position="16"/>
        <end position="243"/>
    </location>
</feature>
<feature type="topological domain" description="Extracellular" evidence="2">
    <location>
        <begin position="16"/>
        <end position="24"/>
    </location>
</feature>
<feature type="transmembrane region" description="Helical; Name=1" evidence="2">
    <location>
        <begin position="25"/>
        <end position="45"/>
    </location>
</feature>
<feature type="topological domain" description="Cytoplasmic" evidence="2">
    <location>
        <begin position="46"/>
        <end position="56"/>
    </location>
</feature>
<feature type="transmembrane region" description="Helical; Name=2" evidence="2">
    <location>
        <begin position="57"/>
        <end position="79"/>
    </location>
</feature>
<feature type="topological domain" description="Extracellular" evidence="2">
    <location>
        <begin position="80"/>
        <end position="90"/>
    </location>
</feature>
<feature type="transmembrane region" description="Helical; Name=3" evidence="2">
    <location>
        <begin position="91"/>
        <end position="111"/>
    </location>
</feature>
<feature type="topological domain" description="Cytoplasmic" evidence="2">
    <location>
        <begin position="112"/>
        <end position="118"/>
    </location>
</feature>
<feature type="transmembrane region" description="Helical; Name=4" evidence="2">
    <location>
        <begin position="119"/>
        <end position="139"/>
    </location>
</feature>
<feature type="topological domain" description="Extracellular" evidence="2">
    <location>
        <begin position="140"/>
        <end position="146"/>
    </location>
</feature>
<feature type="transmembrane region" description="Helical; Name=5" evidence="2">
    <location>
        <begin position="147"/>
        <end position="167"/>
    </location>
</feature>
<feature type="topological domain" description="Cytoplasmic" evidence="2">
    <location>
        <begin position="168"/>
        <end position="180"/>
    </location>
</feature>
<feature type="transmembrane region" description="Helical; Name=6" evidence="2">
    <location>
        <begin position="181"/>
        <end position="201"/>
    </location>
</feature>
<feature type="topological domain" description="Extracellular" evidence="2">
    <location>
        <begin position="202"/>
        <end position="203"/>
    </location>
</feature>
<feature type="transmembrane region" description="Helical; Name=7" evidence="2">
    <location>
        <begin position="204"/>
        <end position="224"/>
    </location>
</feature>
<feature type="topological domain" description="Cytoplasmic" evidence="2">
    <location>
        <begin position="225"/>
        <end position="243"/>
    </location>
</feature>
<feature type="domain" description="MtN3/slv 1">
    <location>
        <begin position="27"/>
        <end position="112"/>
    </location>
</feature>
<feature type="domain" description="MtN3/slv 2">
    <location>
        <begin position="147"/>
        <end position="229"/>
    </location>
</feature>
<gene>
    <name type="primary">SWEET2A</name>
    <name type="ordered locus">Os01g0541800</name>
    <name type="ordered locus">LOC_Os01g36070</name>
    <name type="ORF">OsJ_02136</name>
    <name type="ORF">OSJNBa0062A24.19</name>
</gene>